<sequence length="327" mass="35814">MGNADLRQLAAIEETPFADLEGSVVAVDAHNWLYKYLTTTVQWTGADVYTTSDGTEVANLVGAVQGLPKFFEHGLTPVFVWDGGVTELKDDEIADRREQRERYEEQLDDAREAGDAAEAARLDARTQRLTPTIHETTRELFDLLDIPQVEAPAEGEAQAAYMTRTDDAVDYAGSDDYDCLLLGSPVTLRQLTSSGHPELMDFDATLAEHDLTWEQLVDVGILCGTDFNPGIDGFGPTTALDAIGEHGDLWDVLAAEGEHVAHGDRIRELFLNPDVTDDYVIDPDVSPAIDAARAFVTDEWEVDADAVARGFERIDAAAAQTGLDRWT</sequence>
<reference key="1">
    <citation type="journal article" date="2000" name="Proc. Natl. Acad. Sci. U.S.A.">
        <title>Genome sequence of Halobacterium species NRC-1.</title>
        <authorList>
            <person name="Ng W.V."/>
            <person name="Kennedy S.P."/>
            <person name="Mahairas G.G."/>
            <person name="Berquist B."/>
            <person name="Pan M."/>
            <person name="Shukla H.D."/>
            <person name="Lasky S.R."/>
            <person name="Baliga N.S."/>
            <person name="Thorsson V."/>
            <person name="Sbrogna J."/>
            <person name="Swartzell S."/>
            <person name="Weir D."/>
            <person name="Hall J."/>
            <person name="Dahl T.A."/>
            <person name="Welti R."/>
            <person name="Goo Y.A."/>
            <person name="Leithauser B."/>
            <person name="Keller K."/>
            <person name="Cruz R."/>
            <person name="Danson M.J."/>
            <person name="Hough D.W."/>
            <person name="Maddocks D.G."/>
            <person name="Jablonski P.E."/>
            <person name="Krebs M.P."/>
            <person name="Angevine C.M."/>
            <person name="Dale H."/>
            <person name="Isenbarger T.A."/>
            <person name="Peck R.F."/>
            <person name="Pohlschroder M."/>
            <person name="Spudich J.L."/>
            <person name="Jung K.-H."/>
            <person name="Alam M."/>
            <person name="Freitas T."/>
            <person name="Hou S."/>
            <person name="Daniels C.J."/>
            <person name="Dennis P.P."/>
            <person name="Omer A.D."/>
            <person name="Ebhardt H."/>
            <person name="Lowe T.M."/>
            <person name="Liang P."/>
            <person name="Riley M."/>
            <person name="Hood L."/>
            <person name="DasSarma S."/>
        </authorList>
    </citation>
    <scope>NUCLEOTIDE SEQUENCE [LARGE SCALE GENOMIC DNA]</scope>
    <source>
        <strain>ATCC 700922 / JCM 11081 / NRC-1</strain>
    </source>
</reference>
<protein>
    <recommendedName>
        <fullName evidence="2">Flap endonuclease 1</fullName>
        <shortName evidence="2">FEN-1</shortName>
        <ecNumber evidence="2">3.1.-.-</ecNumber>
    </recommendedName>
    <alternativeName>
        <fullName evidence="2">Flap structure-specific endonuclease 1</fullName>
    </alternativeName>
</protein>
<comment type="function">
    <text evidence="1">Structure-specific nuclease with 5'-flap endonuclease and 5'-3' exonuclease activities involved in DNA replication and repair. During DNA replication, cleaves the 5'-overhanging flap structure that is generated by displacement synthesis when DNA polymerase encounters the 5'-end of a downstream Okazaki fragment. Binds the unpaired 3'-DNA end and kinks the DNA to facilitate 5' cleavage specificity. Cleaves one nucleotide into the double-stranded DNA from the junction in flap DNA, leaving a nick for ligation. Also involved in the base excision repair (BER) pathway. Acts as a genome stabilization factor that prevents flaps from equilibrating into structures that lead to duplications and deletions. Also possesses 5'-3' exonuclease activity on nicked or gapped double-stranded DNA (By similarity).</text>
</comment>
<comment type="cofactor">
    <cofactor evidence="2">
        <name>Mg(2+)</name>
        <dbReference type="ChEBI" id="CHEBI:18420"/>
    </cofactor>
    <text evidence="2">Binds 2 magnesium ions per subunit. They probably participate in the reaction catalyzed by the enzyme. May bind an additional third magnesium ion after substrate binding.</text>
</comment>
<comment type="subunit">
    <text evidence="2">Interacts with PCNA. PCNA stimulates the nuclease activity without altering cleavage specificity.</text>
</comment>
<comment type="similarity">
    <text evidence="2">Belongs to the XPG/RAD2 endonuclease family. FEN1 subfamily.</text>
</comment>
<gene>
    <name evidence="2" type="primary">fen</name>
    <name type="ordered locus">VNG_1359G</name>
</gene>
<name>FEN_HALSA</name>
<proteinExistence type="inferred from homology"/>
<evidence type="ECO:0000250" key="1"/>
<evidence type="ECO:0000255" key="2">
    <source>
        <dbReference type="HAMAP-Rule" id="MF_00614"/>
    </source>
</evidence>
<feature type="chain" id="PRO_0000154051" description="Flap endonuclease 1">
    <location>
        <begin position="1"/>
        <end position="327"/>
    </location>
</feature>
<feature type="region of interest" description="N-domain">
    <location>
        <begin position="1"/>
        <end position="100"/>
    </location>
</feature>
<feature type="region of interest" description="I-domain">
    <location>
        <begin position="118"/>
        <end position="247"/>
    </location>
</feature>
<feature type="region of interest" description="Interaction with PCNA" evidence="2">
    <location>
        <begin position="319"/>
        <end position="327"/>
    </location>
</feature>
<feature type="binding site" evidence="2">
    <location>
        <position position="28"/>
    </location>
    <ligand>
        <name>Mg(2+)</name>
        <dbReference type="ChEBI" id="CHEBI:18420"/>
        <label>1</label>
    </ligand>
</feature>
<feature type="binding site" evidence="2">
    <location>
        <position position="82"/>
    </location>
    <ligand>
        <name>Mg(2+)</name>
        <dbReference type="ChEBI" id="CHEBI:18420"/>
        <label>1</label>
    </ligand>
</feature>
<feature type="binding site" evidence="2">
    <location>
        <position position="154"/>
    </location>
    <ligand>
        <name>Mg(2+)</name>
        <dbReference type="ChEBI" id="CHEBI:18420"/>
        <label>1</label>
    </ligand>
</feature>
<feature type="binding site" evidence="2">
    <location>
        <position position="156"/>
    </location>
    <ligand>
        <name>Mg(2+)</name>
        <dbReference type="ChEBI" id="CHEBI:18420"/>
        <label>1</label>
    </ligand>
</feature>
<feature type="binding site" evidence="2">
    <location>
        <position position="176"/>
    </location>
    <ligand>
        <name>Mg(2+)</name>
        <dbReference type="ChEBI" id="CHEBI:18420"/>
        <label>2</label>
    </ligand>
</feature>
<feature type="binding site" evidence="2">
    <location>
        <position position="178"/>
    </location>
    <ligand>
        <name>Mg(2+)</name>
        <dbReference type="ChEBI" id="CHEBI:18420"/>
        <label>2</label>
    </ligand>
</feature>
<feature type="binding site" evidence="2">
    <location>
        <position position="226"/>
    </location>
    <ligand>
        <name>Mg(2+)</name>
        <dbReference type="ChEBI" id="CHEBI:18420"/>
        <label>2</label>
    </ligand>
</feature>
<accession>Q9HQ27</accession>
<dbReference type="EC" id="3.1.-.-" evidence="2"/>
<dbReference type="EMBL" id="AE004437">
    <property type="protein sequence ID" value="AAG19690.1"/>
    <property type="molecule type" value="Genomic_DNA"/>
</dbReference>
<dbReference type="PIR" id="F84290">
    <property type="entry name" value="F84290"/>
</dbReference>
<dbReference type="RefSeq" id="WP_010902986.1">
    <property type="nucleotide sequence ID" value="NC_002607.1"/>
</dbReference>
<dbReference type="SMR" id="Q9HQ27"/>
<dbReference type="FunCoup" id="Q9HQ27">
    <property type="interactions" value="147"/>
</dbReference>
<dbReference type="STRING" id="64091.VNG_1359G"/>
<dbReference type="PaxDb" id="64091-VNG_1359G"/>
<dbReference type="GeneID" id="68694095"/>
<dbReference type="KEGG" id="hal:VNG_1359G"/>
<dbReference type="PATRIC" id="fig|64091.14.peg.1038"/>
<dbReference type="HOGENOM" id="CLU_032444_0_0_2"/>
<dbReference type="InParanoid" id="Q9HQ27"/>
<dbReference type="OrthoDB" id="9593at2157"/>
<dbReference type="PhylomeDB" id="Q9HQ27"/>
<dbReference type="Proteomes" id="UP000000554">
    <property type="component" value="Chromosome"/>
</dbReference>
<dbReference type="GO" id="GO:0008409">
    <property type="term" value="F:5'-3' exonuclease activity"/>
    <property type="evidence" value="ECO:0007669"/>
    <property type="project" value="UniProtKB-UniRule"/>
</dbReference>
<dbReference type="GO" id="GO:0017108">
    <property type="term" value="F:5'-flap endonuclease activity"/>
    <property type="evidence" value="ECO:0000318"/>
    <property type="project" value="GO_Central"/>
</dbReference>
<dbReference type="GO" id="GO:0003677">
    <property type="term" value="F:DNA binding"/>
    <property type="evidence" value="ECO:0007669"/>
    <property type="project" value="UniProtKB-UniRule"/>
</dbReference>
<dbReference type="GO" id="GO:0000287">
    <property type="term" value="F:magnesium ion binding"/>
    <property type="evidence" value="ECO:0007669"/>
    <property type="project" value="UniProtKB-UniRule"/>
</dbReference>
<dbReference type="GO" id="GO:0006281">
    <property type="term" value="P:DNA repair"/>
    <property type="evidence" value="ECO:0007669"/>
    <property type="project" value="UniProtKB-UniRule"/>
</dbReference>
<dbReference type="GO" id="GO:0043137">
    <property type="term" value="P:DNA replication, removal of RNA primer"/>
    <property type="evidence" value="ECO:0007669"/>
    <property type="project" value="UniProtKB-UniRule"/>
</dbReference>
<dbReference type="CDD" id="cd09903">
    <property type="entry name" value="H3TH_FEN1-Arc"/>
    <property type="match status" value="1"/>
</dbReference>
<dbReference type="CDD" id="cd09867">
    <property type="entry name" value="PIN_FEN1"/>
    <property type="match status" value="1"/>
</dbReference>
<dbReference type="Gene3D" id="1.10.150.20">
    <property type="entry name" value="5' to 3' exonuclease, C-terminal subdomain"/>
    <property type="match status" value="1"/>
</dbReference>
<dbReference type="Gene3D" id="3.40.50.1010">
    <property type="entry name" value="5'-nuclease"/>
    <property type="match status" value="1"/>
</dbReference>
<dbReference type="HAMAP" id="MF_00614">
    <property type="entry name" value="Fen"/>
    <property type="match status" value="1"/>
</dbReference>
<dbReference type="InterPro" id="IPR036279">
    <property type="entry name" value="5-3_exonuclease_C_sf"/>
</dbReference>
<dbReference type="InterPro" id="IPR023426">
    <property type="entry name" value="Flap_endonuc"/>
</dbReference>
<dbReference type="InterPro" id="IPR019973">
    <property type="entry name" value="Flap_endonuc_arc"/>
</dbReference>
<dbReference type="InterPro" id="IPR008918">
    <property type="entry name" value="HhH2"/>
</dbReference>
<dbReference type="InterPro" id="IPR029060">
    <property type="entry name" value="PIN-like_dom_sf"/>
</dbReference>
<dbReference type="InterPro" id="IPR006086">
    <property type="entry name" value="XPG-I_dom"/>
</dbReference>
<dbReference type="InterPro" id="IPR006084">
    <property type="entry name" value="XPG/Rad2"/>
</dbReference>
<dbReference type="InterPro" id="IPR019974">
    <property type="entry name" value="XPG_CS"/>
</dbReference>
<dbReference type="InterPro" id="IPR006085">
    <property type="entry name" value="XPG_DNA_repair_N"/>
</dbReference>
<dbReference type="NCBIfam" id="TIGR03674">
    <property type="entry name" value="fen_arch"/>
    <property type="match status" value="1"/>
</dbReference>
<dbReference type="PANTHER" id="PTHR11081:SF9">
    <property type="entry name" value="FLAP ENDONUCLEASE 1"/>
    <property type="match status" value="1"/>
</dbReference>
<dbReference type="PANTHER" id="PTHR11081">
    <property type="entry name" value="FLAP ENDONUCLEASE FAMILY MEMBER"/>
    <property type="match status" value="1"/>
</dbReference>
<dbReference type="Pfam" id="PF00867">
    <property type="entry name" value="XPG_I"/>
    <property type="match status" value="1"/>
</dbReference>
<dbReference type="Pfam" id="PF00752">
    <property type="entry name" value="XPG_N"/>
    <property type="match status" value="1"/>
</dbReference>
<dbReference type="PRINTS" id="PR00853">
    <property type="entry name" value="XPGRADSUPER"/>
</dbReference>
<dbReference type="SMART" id="SM00279">
    <property type="entry name" value="HhH2"/>
    <property type="match status" value="1"/>
</dbReference>
<dbReference type="SMART" id="SM00484">
    <property type="entry name" value="XPGI"/>
    <property type="match status" value="1"/>
</dbReference>
<dbReference type="SMART" id="SM00485">
    <property type="entry name" value="XPGN"/>
    <property type="match status" value="1"/>
</dbReference>
<dbReference type="SUPFAM" id="SSF47807">
    <property type="entry name" value="5' to 3' exonuclease, C-terminal subdomain"/>
    <property type="match status" value="1"/>
</dbReference>
<dbReference type="SUPFAM" id="SSF88723">
    <property type="entry name" value="PIN domain-like"/>
    <property type="match status" value="1"/>
</dbReference>
<dbReference type="PROSITE" id="PS00841">
    <property type="entry name" value="XPG_1"/>
    <property type="match status" value="1"/>
</dbReference>
<organism>
    <name type="scientific">Halobacterium salinarum (strain ATCC 700922 / JCM 11081 / NRC-1)</name>
    <name type="common">Halobacterium halobium</name>
    <dbReference type="NCBI Taxonomy" id="64091"/>
    <lineage>
        <taxon>Archaea</taxon>
        <taxon>Methanobacteriati</taxon>
        <taxon>Methanobacteriota</taxon>
        <taxon>Stenosarchaea group</taxon>
        <taxon>Halobacteria</taxon>
        <taxon>Halobacteriales</taxon>
        <taxon>Halobacteriaceae</taxon>
        <taxon>Halobacterium</taxon>
        <taxon>Halobacterium salinarum NRC-34001</taxon>
    </lineage>
</organism>
<keyword id="KW-0227">DNA damage</keyword>
<keyword id="KW-0234">DNA repair</keyword>
<keyword id="KW-0235">DNA replication</keyword>
<keyword id="KW-0255">Endonuclease</keyword>
<keyword id="KW-0269">Exonuclease</keyword>
<keyword id="KW-0378">Hydrolase</keyword>
<keyword id="KW-0460">Magnesium</keyword>
<keyword id="KW-0479">Metal-binding</keyword>
<keyword id="KW-0540">Nuclease</keyword>
<keyword id="KW-1185">Reference proteome</keyword>